<name>TSAD_BURP1</name>
<gene>
    <name evidence="1" type="primary">tsaD</name>
    <name type="synonym">gcp</name>
    <name type="ordered locus">BURPS1710b_A0839</name>
</gene>
<evidence type="ECO:0000255" key="1">
    <source>
        <dbReference type="HAMAP-Rule" id="MF_01445"/>
    </source>
</evidence>
<evidence type="ECO:0000305" key="2"/>
<dbReference type="EC" id="2.3.1.234" evidence="1"/>
<dbReference type="EMBL" id="CP000125">
    <property type="protein sequence ID" value="ABA53718.1"/>
    <property type="status" value="ALT_INIT"/>
    <property type="molecule type" value="Genomic_DNA"/>
</dbReference>
<dbReference type="RefSeq" id="WP_004552017.1">
    <property type="nucleotide sequence ID" value="NC_007435.1"/>
</dbReference>
<dbReference type="SMR" id="Q3JKA5"/>
<dbReference type="EnsemblBacteria" id="ABA53718">
    <property type="protein sequence ID" value="ABA53718"/>
    <property type="gene ID" value="BURPS1710b_A0839"/>
</dbReference>
<dbReference type="GeneID" id="93063967"/>
<dbReference type="KEGG" id="bpm:BURPS1710b_A0839"/>
<dbReference type="HOGENOM" id="CLU_023208_0_2_4"/>
<dbReference type="Proteomes" id="UP000002700">
    <property type="component" value="Chromosome II"/>
</dbReference>
<dbReference type="GO" id="GO:0005737">
    <property type="term" value="C:cytoplasm"/>
    <property type="evidence" value="ECO:0007669"/>
    <property type="project" value="UniProtKB-SubCell"/>
</dbReference>
<dbReference type="GO" id="GO:0005506">
    <property type="term" value="F:iron ion binding"/>
    <property type="evidence" value="ECO:0007669"/>
    <property type="project" value="UniProtKB-UniRule"/>
</dbReference>
<dbReference type="GO" id="GO:0061711">
    <property type="term" value="F:N(6)-L-threonylcarbamoyladenine synthase activity"/>
    <property type="evidence" value="ECO:0007669"/>
    <property type="project" value="UniProtKB-EC"/>
</dbReference>
<dbReference type="GO" id="GO:0002949">
    <property type="term" value="P:tRNA threonylcarbamoyladenosine modification"/>
    <property type="evidence" value="ECO:0007669"/>
    <property type="project" value="UniProtKB-UniRule"/>
</dbReference>
<dbReference type="CDD" id="cd24133">
    <property type="entry name" value="ASKHA_NBD_TsaD_bac"/>
    <property type="match status" value="1"/>
</dbReference>
<dbReference type="FunFam" id="3.30.420.40:FF:000012">
    <property type="entry name" value="tRNA N6-adenosine threonylcarbamoyltransferase"/>
    <property type="match status" value="1"/>
</dbReference>
<dbReference type="FunFam" id="3.30.420.40:FF:000040">
    <property type="entry name" value="tRNA N6-adenosine threonylcarbamoyltransferase"/>
    <property type="match status" value="1"/>
</dbReference>
<dbReference type="Gene3D" id="3.30.420.40">
    <property type="match status" value="2"/>
</dbReference>
<dbReference type="HAMAP" id="MF_01445">
    <property type="entry name" value="TsaD"/>
    <property type="match status" value="1"/>
</dbReference>
<dbReference type="InterPro" id="IPR043129">
    <property type="entry name" value="ATPase_NBD"/>
</dbReference>
<dbReference type="InterPro" id="IPR000905">
    <property type="entry name" value="Gcp-like_dom"/>
</dbReference>
<dbReference type="InterPro" id="IPR017861">
    <property type="entry name" value="KAE1/TsaD"/>
</dbReference>
<dbReference type="InterPro" id="IPR022450">
    <property type="entry name" value="TsaD"/>
</dbReference>
<dbReference type="NCBIfam" id="TIGR00329">
    <property type="entry name" value="gcp_kae1"/>
    <property type="match status" value="1"/>
</dbReference>
<dbReference type="NCBIfam" id="TIGR03723">
    <property type="entry name" value="T6A_TsaD_YgjD"/>
    <property type="match status" value="1"/>
</dbReference>
<dbReference type="PANTHER" id="PTHR11735">
    <property type="entry name" value="TRNA N6-ADENOSINE THREONYLCARBAMOYLTRANSFERASE"/>
    <property type="match status" value="1"/>
</dbReference>
<dbReference type="PANTHER" id="PTHR11735:SF6">
    <property type="entry name" value="TRNA N6-ADENOSINE THREONYLCARBAMOYLTRANSFERASE, MITOCHONDRIAL"/>
    <property type="match status" value="1"/>
</dbReference>
<dbReference type="Pfam" id="PF00814">
    <property type="entry name" value="TsaD"/>
    <property type="match status" value="1"/>
</dbReference>
<dbReference type="PRINTS" id="PR00789">
    <property type="entry name" value="OSIALOPTASE"/>
</dbReference>
<dbReference type="SUPFAM" id="SSF53067">
    <property type="entry name" value="Actin-like ATPase domain"/>
    <property type="match status" value="2"/>
</dbReference>
<organism>
    <name type="scientific">Burkholderia pseudomallei (strain 1710b)</name>
    <dbReference type="NCBI Taxonomy" id="320372"/>
    <lineage>
        <taxon>Bacteria</taxon>
        <taxon>Pseudomonadati</taxon>
        <taxon>Pseudomonadota</taxon>
        <taxon>Betaproteobacteria</taxon>
        <taxon>Burkholderiales</taxon>
        <taxon>Burkholderiaceae</taxon>
        <taxon>Burkholderia</taxon>
        <taxon>pseudomallei group</taxon>
    </lineage>
</organism>
<accession>Q3JKA5</accession>
<reference key="1">
    <citation type="journal article" date="2010" name="Genome Biol. Evol.">
        <title>Continuing evolution of Burkholderia mallei through genome reduction and large-scale rearrangements.</title>
        <authorList>
            <person name="Losada L."/>
            <person name="Ronning C.M."/>
            <person name="DeShazer D."/>
            <person name="Woods D."/>
            <person name="Fedorova N."/>
            <person name="Kim H.S."/>
            <person name="Shabalina S.A."/>
            <person name="Pearson T.R."/>
            <person name="Brinkac L."/>
            <person name="Tan P."/>
            <person name="Nandi T."/>
            <person name="Crabtree J."/>
            <person name="Badger J."/>
            <person name="Beckstrom-Sternberg S."/>
            <person name="Saqib M."/>
            <person name="Schutzer S.E."/>
            <person name="Keim P."/>
            <person name="Nierman W.C."/>
        </authorList>
    </citation>
    <scope>NUCLEOTIDE SEQUENCE [LARGE SCALE GENOMIC DNA]</scope>
    <source>
        <strain>1710b</strain>
    </source>
</reference>
<comment type="function">
    <text evidence="1">Required for the formation of a threonylcarbamoyl group on adenosine at position 37 (t(6)A37) in tRNAs that read codons beginning with adenine. Is involved in the transfer of the threonylcarbamoyl moiety of threonylcarbamoyl-AMP (TC-AMP) to the N6 group of A37, together with TsaE and TsaB. TsaD likely plays a direct catalytic role in this reaction.</text>
</comment>
<comment type="catalytic activity">
    <reaction evidence="1">
        <text>L-threonylcarbamoyladenylate + adenosine(37) in tRNA = N(6)-L-threonylcarbamoyladenosine(37) in tRNA + AMP + H(+)</text>
        <dbReference type="Rhea" id="RHEA:37059"/>
        <dbReference type="Rhea" id="RHEA-COMP:10162"/>
        <dbReference type="Rhea" id="RHEA-COMP:10163"/>
        <dbReference type="ChEBI" id="CHEBI:15378"/>
        <dbReference type="ChEBI" id="CHEBI:73682"/>
        <dbReference type="ChEBI" id="CHEBI:74411"/>
        <dbReference type="ChEBI" id="CHEBI:74418"/>
        <dbReference type="ChEBI" id="CHEBI:456215"/>
        <dbReference type="EC" id="2.3.1.234"/>
    </reaction>
</comment>
<comment type="cofactor">
    <cofactor evidence="1">
        <name>Fe(2+)</name>
        <dbReference type="ChEBI" id="CHEBI:29033"/>
    </cofactor>
    <text evidence="1">Binds 1 Fe(2+) ion per subunit.</text>
</comment>
<comment type="subcellular location">
    <subcellularLocation>
        <location evidence="1">Cytoplasm</location>
    </subcellularLocation>
</comment>
<comment type="similarity">
    <text evidence="1">Belongs to the KAE1 / TsaD family.</text>
</comment>
<comment type="sequence caution" evidence="2">
    <conflict type="erroneous initiation">
        <sequence resource="EMBL-CDS" id="ABA53718"/>
    </conflict>
</comment>
<sequence>MLVLGIESSCDETGLALYDTERGLLAHALHSQIAMHREYGGVVPELASRDHIRRALPLLEEVLAASGARRDDIDAIAFTQGPGLAGALLVGASIANALAFAWDKPTIGIHHLEGHLLSPLLVAEPPPFPFVALLVSGGHTQLMRVSDVGVYETLGETLDDAAGEAFDKTAKLLGLGYPGGPEVSRLAEAGTPGAVVLPRPMLHSGDLDFSFSGLKTAVLTQMKKLEAAHAGGAVLERAKADFARGFVDAAVDVLVAKSLAALKATRLKRLVVAGGVGANRQLRAALSAAAQKRGFDVHYPDLALCTDNGAMIALAGALRLARWPSQASRDYAFTVKPRWDLASLAR</sequence>
<protein>
    <recommendedName>
        <fullName evidence="1">tRNA N6-adenosine threonylcarbamoyltransferase</fullName>
        <ecNumber evidence="1">2.3.1.234</ecNumber>
    </recommendedName>
    <alternativeName>
        <fullName evidence="1">N6-L-threonylcarbamoyladenine synthase</fullName>
        <shortName evidence="1">t(6)A synthase</shortName>
    </alternativeName>
    <alternativeName>
        <fullName evidence="1">t(6)A37 threonylcarbamoyladenosine biosynthesis protein TsaD</fullName>
    </alternativeName>
    <alternativeName>
        <fullName evidence="1">tRNA threonylcarbamoyladenosine biosynthesis protein TsaD</fullName>
    </alternativeName>
</protein>
<keyword id="KW-0012">Acyltransferase</keyword>
<keyword id="KW-0963">Cytoplasm</keyword>
<keyword id="KW-0408">Iron</keyword>
<keyword id="KW-0479">Metal-binding</keyword>
<keyword id="KW-0808">Transferase</keyword>
<keyword id="KW-0819">tRNA processing</keyword>
<feature type="chain" id="PRO_0000303305" description="tRNA N6-adenosine threonylcarbamoyltransferase">
    <location>
        <begin position="1"/>
        <end position="346"/>
    </location>
</feature>
<feature type="binding site" evidence="1">
    <location>
        <position position="111"/>
    </location>
    <ligand>
        <name>Fe cation</name>
        <dbReference type="ChEBI" id="CHEBI:24875"/>
    </ligand>
</feature>
<feature type="binding site" evidence="1">
    <location>
        <position position="115"/>
    </location>
    <ligand>
        <name>Fe cation</name>
        <dbReference type="ChEBI" id="CHEBI:24875"/>
    </ligand>
</feature>
<feature type="binding site" evidence="1">
    <location>
        <begin position="134"/>
        <end position="138"/>
    </location>
    <ligand>
        <name>substrate</name>
    </ligand>
</feature>
<feature type="binding site" evidence="1">
    <location>
        <position position="167"/>
    </location>
    <ligand>
        <name>substrate</name>
    </ligand>
</feature>
<feature type="binding site" evidence="1">
    <location>
        <position position="180"/>
    </location>
    <ligand>
        <name>substrate</name>
    </ligand>
</feature>
<feature type="binding site" evidence="1">
    <location>
        <position position="279"/>
    </location>
    <ligand>
        <name>substrate</name>
    </ligand>
</feature>
<feature type="binding site" evidence="1">
    <location>
        <position position="307"/>
    </location>
    <ligand>
        <name>Fe cation</name>
        <dbReference type="ChEBI" id="CHEBI:24875"/>
    </ligand>
</feature>
<proteinExistence type="inferred from homology"/>